<gene>
    <name evidence="2" type="primary">aaeB</name>
    <name type="ordered locus">Z4599</name>
    <name type="ordered locus">ECs4113</name>
</gene>
<name>AAEB_ECO57</name>
<evidence type="ECO:0000255" key="1"/>
<evidence type="ECO:0000255" key="2">
    <source>
        <dbReference type="HAMAP-Rule" id="MF_01545"/>
    </source>
</evidence>
<sequence>MDIFSIANQHIRFAVKLATAIVLALFVGFHFQLETPRWAVLTAAIVAAGPAFAAGGEPYSGAIRYRGFLRIIGTFIGCIAGLVIIIAMIRAPLLMILVCCIWAGFCTWISSLVRIENSYAWGLAGYTALIIVITIQPEPLLTPQFAVERCSEIVIGIVCAIMADLLFSPRSIKQEVDRELESLLVAQYQLMQLCIKHGDGEVVDKAWGDLVRRTTALQGMRSNLNMESSRWARANRRLKAINTLSLTLITQSCETYLIQNTRPELITDTFREFFDTPVETAQDVHKQLKRLRRVIAWTGERETPVTIYSWVAAATRYQLLKRGVISNTKINATEEEILQGEPEVKVESAERHHAMVNFWRTTLSCILGTLFWLWTGWTSGSGAMVMIAVVTSLAMRLPNPRMVAIDFIYGTLAALPLGLLYFLVIIPNTQQSMLLLCISLAVLGFFLGIEVQKRRLGSMGALASTINIIVLDNPMTFHFSQFLDSALGQIVGCVLAFTVILLVRDKSRDRTGRVLLNQFVSAAVSAMTTNVARRKENHLPALYQQLFLLMNKFPGDLPKFRLALTMIIAHQRLRDAPIPVNEDLSAFHRQMRRTADHVISARSDDKRRRYFGQLLEELEIYQEKLCIWQAPPQVTEPVHRLAGMLHKYQHALTDS</sequence>
<dbReference type="EMBL" id="AE005174">
    <property type="protein sequence ID" value="AAG58368.1"/>
    <property type="molecule type" value="Genomic_DNA"/>
</dbReference>
<dbReference type="EMBL" id="BA000007">
    <property type="protein sequence ID" value="BAB37536.1"/>
    <property type="molecule type" value="Genomic_DNA"/>
</dbReference>
<dbReference type="PIR" id="A91143">
    <property type="entry name" value="A91143"/>
</dbReference>
<dbReference type="PIR" id="D85988">
    <property type="entry name" value="D85988"/>
</dbReference>
<dbReference type="RefSeq" id="NP_312140.1">
    <property type="nucleotide sequence ID" value="NC_002695.1"/>
</dbReference>
<dbReference type="RefSeq" id="WP_000350958.1">
    <property type="nucleotide sequence ID" value="NZ_VOAI01000014.1"/>
</dbReference>
<dbReference type="SMR" id="Q8X9E6"/>
<dbReference type="STRING" id="155864.Z4599"/>
<dbReference type="GeneID" id="916037"/>
<dbReference type="KEGG" id="ece:Z4599"/>
<dbReference type="KEGG" id="ecs:ECs_4113"/>
<dbReference type="PATRIC" id="fig|386585.9.peg.4294"/>
<dbReference type="eggNOG" id="COG1289">
    <property type="taxonomic scope" value="Bacteria"/>
</dbReference>
<dbReference type="HOGENOM" id="CLU_027647_0_0_6"/>
<dbReference type="OMA" id="RCTEICL"/>
<dbReference type="Proteomes" id="UP000000558">
    <property type="component" value="Chromosome"/>
</dbReference>
<dbReference type="Proteomes" id="UP000002519">
    <property type="component" value="Chromosome"/>
</dbReference>
<dbReference type="GO" id="GO:0005886">
    <property type="term" value="C:plasma membrane"/>
    <property type="evidence" value="ECO:0007669"/>
    <property type="project" value="UniProtKB-SubCell"/>
</dbReference>
<dbReference type="GO" id="GO:0022857">
    <property type="term" value="F:transmembrane transporter activity"/>
    <property type="evidence" value="ECO:0007669"/>
    <property type="project" value="UniProtKB-UniRule"/>
</dbReference>
<dbReference type="GO" id="GO:0046942">
    <property type="term" value="P:carboxylic acid transport"/>
    <property type="evidence" value="ECO:0007669"/>
    <property type="project" value="InterPro"/>
</dbReference>
<dbReference type="HAMAP" id="MF_01545">
    <property type="entry name" value="AaeB"/>
    <property type="match status" value="1"/>
</dbReference>
<dbReference type="InterPro" id="IPR006726">
    <property type="entry name" value="PHBA_efflux_AaeB/fusaric-R"/>
</dbReference>
<dbReference type="InterPro" id="IPR023706">
    <property type="entry name" value="PHBA_efflux_pump_AaeB"/>
</dbReference>
<dbReference type="NCBIfam" id="NF007916">
    <property type="entry name" value="PRK10631.1"/>
    <property type="match status" value="1"/>
</dbReference>
<dbReference type="PANTHER" id="PTHR30509:SF9">
    <property type="entry name" value="MULTIDRUG RESISTANCE PROTEIN MDTO"/>
    <property type="match status" value="1"/>
</dbReference>
<dbReference type="PANTHER" id="PTHR30509">
    <property type="entry name" value="P-HYDROXYBENZOIC ACID EFFLUX PUMP SUBUNIT-RELATED"/>
    <property type="match status" value="1"/>
</dbReference>
<dbReference type="Pfam" id="PF04632">
    <property type="entry name" value="FUSC"/>
    <property type="match status" value="1"/>
</dbReference>
<accession>Q8X9E6</accession>
<accession>Q7AAG1</accession>
<comment type="function">
    <text evidence="2">Forms an efflux pump with AaeA. Could function as a metabolic relief valve, allowing to eliminate certain compounds when they accumulate to high levels in the cell.</text>
</comment>
<comment type="subcellular location">
    <subcellularLocation>
        <location evidence="2">Cell inner membrane</location>
        <topology evidence="2">Multi-pass membrane protein</topology>
    </subcellularLocation>
</comment>
<comment type="induction">
    <text evidence="2">Positively coregulated with aaeA and aaeX by AaeR.</text>
</comment>
<comment type="similarity">
    <text evidence="2">Belongs to the aromatic acid exporter ArAE (TC 2.A.85) family.</text>
</comment>
<organism>
    <name type="scientific">Escherichia coli O157:H7</name>
    <dbReference type="NCBI Taxonomy" id="83334"/>
    <lineage>
        <taxon>Bacteria</taxon>
        <taxon>Pseudomonadati</taxon>
        <taxon>Pseudomonadota</taxon>
        <taxon>Gammaproteobacteria</taxon>
        <taxon>Enterobacterales</taxon>
        <taxon>Enterobacteriaceae</taxon>
        <taxon>Escherichia</taxon>
    </lineage>
</organism>
<proteinExistence type="inferred from homology"/>
<reference key="1">
    <citation type="journal article" date="2001" name="Nature">
        <title>Genome sequence of enterohaemorrhagic Escherichia coli O157:H7.</title>
        <authorList>
            <person name="Perna N.T."/>
            <person name="Plunkett G. III"/>
            <person name="Burland V."/>
            <person name="Mau B."/>
            <person name="Glasner J.D."/>
            <person name="Rose D.J."/>
            <person name="Mayhew G.F."/>
            <person name="Evans P.S."/>
            <person name="Gregor J."/>
            <person name="Kirkpatrick H.A."/>
            <person name="Posfai G."/>
            <person name="Hackett J."/>
            <person name="Klink S."/>
            <person name="Boutin A."/>
            <person name="Shao Y."/>
            <person name="Miller L."/>
            <person name="Grotbeck E.J."/>
            <person name="Davis N.W."/>
            <person name="Lim A."/>
            <person name="Dimalanta E.T."/>
            <person name="Potamousis K."/>
            <person name="Apodaca J."/>
            <person name="Anantharaman T.S."/>
            <person name="Lin J."/>
            <person name="Yen G."/>
            <person name="Schwartz D.C."/>
            <person name="Welch R.A."/>
            <person name="Blattner F.R."/>
        </authorList>
    </citation>
    <scope>NUCLEOTIDE SEQUENCE [LARGE SCALE GENOMIC DNA]</scope>
    <source>
        <strain>O157:H7 / EDL933 / ATCC 700927 / EHEC</strain>
    </source>
</reference>
<reference key="2">
    <citation type="journal article" date="2001" name="DNA Res.">
        <title>Complete genome sequence of enterohemorrhagic Escherichia coli O157:H7 and genomic comparison with a laboratory strain K-12.</title>
        <authorList>
            <person name="Hayashi T."/>
            <person name="Makino K."/>
            <person name="Ohnishi M."/>
            <person name="Kurokawa K."/>
            <person name="Ishii K."/>
            <person name="Yokoyama K."/>
            <person name="Han C.-G."/>
            <person name="Ohtsubo E."/>
            <person name="Nakayama K."/>
            <person name="Murata T."/>
            <person name="Tanaka M."/>
            <person name="Tobe T."/>
            <person name="Iida T."/>
            <person name="Takami H."/>
            <person name="Honda T."/>
            <person name="Sasakawa C."/>
            <person name="Ogasawara N."/>
            <person name="Yasunaga T."/>
            <person name="Kuhara S."/>
            <person name="Shiba T."/>
            <person name="Hattori M."/>
            <person name="Shinagawa H."/>
        </authorList>
    </citation>
    <scope>NUCLEOTIDE SEQUENCE [LARGE SCALE GENOMIC DNA]</scope>
    <source>
        <strain>O157:H7 / Sakai / RIMD 0509952 / EHEC</strain>
    </source>
</reference>
<protein>
    <recommendedName>
        <fullName evidence="2">p-hydroxybenzoic acid efflux pump subunit AaeB</fullName>
        <shortName evidence="2">pHBA efflux pump protein B</shortName>
    </recommendedName>
</protein>
<feature type="chain" id="PRO_0000210079" description="p-hydroxybenzoic acid efflux pump subunit AaeB">
    <location>
        <begin position="1"/>
        <end position="655"/>
    </location>
</feature>
<feature type="topological domain" description="Periplasmic" evidence="1">
    <location>
        <begin position="1"/>
        <end position="12"/>
    </location>
</feature>
<feature type="transmembrane region" description="Helical" evidence="2">
    <location>
        <begin position="13"/>
        <end position="33"/>
    </location>
</feature>
<feature type="topological domain" description="Cytoplasmic" evidence="1">
    <location>
        <begin position="34"/>
        <end position="37"/>
    </location>
</feature>
<feature type="transmembrane region" description="Helical" evidence="2">
    <location>
        <begin position="38"/>
        <end position="58"/>
    </location>
</feature>
<feature type="topological domain" description="Periplasmic" evidence="1">
    <location>
        <begin position="59"/>
        <end position="68"/>
    </location>
</feature>
<feature type="transmembrane region" description="Helical" evidence="2">
    <location>
        <begin position="69"/>
        <end position="89"/>
    </location>
</feature>
<feature type="topological domain" description="Cytoplasmic" evidence="1">
    <location>
        <begin position="90"/>
        <end position="92"/>
    </location>
</feature>
<feature type="transmembrane region" description="Helical" evidence="2">
    <location>
        <begin position="93"/>
        <end position="113"/>
    </location>
</feature>
<feature type="topological domain" description="Periplasmic" evidence="1">
    <location>
        <begin position="114"/>
        <end position="120"/>
    </location>
</feature>
<feature type="transmembrane region" description="Helical" evidence="2">
    <location>
        <begin position="121"/>
        <end position="141"/>
    </location>
</feature>
<feature type="topological domain" description="Cytoplasmic" evidence="1">
    <location>
        <begin position="142"/>
        <end position="151"/>
    </location>
</feature>
<feature type="transmembrane region" description="Helical" evidence="2">
    <location>
        <begin position="152"/>
        <end position="172"/>
    </location>
</feature>
<feature type="topological domain" description="Periplasmic" evidence="1">
    <location>
        <begin position="173"/>
        <end position="369"/>
    </location>
</feature>
<feature type="transmembrane region" description="Helical" evidence="2">
    <location>
        <begin position="370"/>
        <end position="390"/>
    </location>
</feature>
<feature type="topological domain" description="Cytoplasmic" evidence="1">
    <location>
        <begin position="391"/>
        <end position="406"/>
    </location>
</feature>
<feature type="transmembrane region" description="Helical" evidence="2">
    <location>
        <begin position="407"/>
        <end position="427"/>
    </location>
</feature>
<feature type="topological domain" description="Periplasmic" evidence="1">
    <location>
        <begin position="428"/>
        <end position="430"/>
    </location>
</feature>
<feature type="transmembrane region" description="Helical" evidence="2">
    <location>
        <begin position="431"/>
        <end position="451"/>
    </location>
</feature>
<feature type="topological domain" description="Cytoplasmic" evidence="1">
    <location>
        <begin position="452"/>
        <end position="458"/>
    </location>
</feature>
<feature type="transmembrane region" description="Helical" evidence="2">
    <location>
        <begin position="459"/>
        <end position="479"/>
    </location>
</feature>
<feature type="topological domain" description="Periplasmic" evidence="1">
    <location>
        <begin position="480"/>
        <end position="481"/>
    </location>
</feature>
<feature type="transmembrane region" description="Helical" evidence="2">
    <location>
        <begin position="482"/>
        <end position="502"/>
    </location>
</feature>
<feature type="topological domain" description="Cytoplasmic" evidence="1">
    <location>
        <begin position="503"/>
        <end position="655"/>
    </location>
</feature>
<keyword id="KW-0997">Cell inner membrane</keyword>
<keyword id="KW-1003">Cell membrane</keyword>
<keyword id="KW-0472">Membrane</keyword>
<keyword id="KW-1185">Reference proteome</keyword>
<keyword id="KW-0812">Transmembrane</keyword>
<keyword id="KW-1133">Transmembrane helix</keyword>
<keyword id="KW-0813">Transport</keyword>